<proteinExistence type="inferred from homology"/>
<organism>
    <name type="scientific">Yersinia pestis</name>
    <dbReference type="NCBI Taxonomy" id="632"/>
    <lineage>
        <taxon>Bacteria</taxon>
        <taxon>Pseudomonadati</taxon>
        <taxon>Pseudomonadota</taxon>
        <taxon>Gammaproteobacteria</taxon>
        <taxon>Enterobacterales</taxon>
        <taxon>Yersiniaceae</taxon>
        <taxon>Yersinia</taxon>
    </lineage>
</organism>
<gene>
    <name evidence="1" type="primary">rsmH</name>
    <name type="synonym">mraW</name>
    <name type="ordered locus">YPO0547</name>
    <name type="ordered locus">y3634</name>
    <name type="ordered locus">YP_3637</name>
</gene>
<dbReference type="EC" id="2.1.1.199" evidence="1"/>
<dbReference type="EMBL" id="AL590842">
    <property type="protein sequence ID" value="CAL19226.1"/>
    <property type="molecule type" value="Genomic_DNA"/>
</dbReference>
<dbReference type="EMBL" id="AE009952">
    <property type="protein sequence ID" value="AAM87182.1"/>
    <property type="molecule type" value="Genomic_DNA"/>
</dbReference>
<dbReference type="EMBL" id="AE017042">
    <property type="protein sequence ID" value="AAS63785.1"/>
    <property type="molecule type" value="Genomic_DNA"/>
</dbReference>
<dbReference type="PIR" id="AH0067">
    <property type="entry name" value="AH0067"/>
</dbReference>
<dbReference type="RefSeq" id="WP_002210442.1">
    <property type="nucleotide sequence ID" value="NZ_WUCM01000081.1"/>
</dbReference>
<dbReference type="RefSeq" id="YP_002345618.1">
    <property type="nucleotide sequence ID" value="NC_003143.1"/>
</dbReference>
<dbReference type="SMR" id="Q8ZIF7"/>
<dbReference type="IntAct" id="Q8ZIF7">
    <property type="interactions" value="2"/>
</dbReference>
<dbReference type="STRING" id="214092.YPO0547"/>
<dbReference type="PaxDb" id="214092-YPO0547"/>
<dbReference type="DNASU" id="1148581"/>
<dbReference type="EnsemblBacteria" id="AAS63785">
    <property type="protein sequence ID" value="AAS63785"/>
    <property type="gene ID" value="YP_3637"/>
</dbReference>
<dbReference type="GeneID" id="57974068"/>
<dbReference type="KEGG" id="ype:YPO0547"/>
<dbReference type="KEGG" id="ypk:y3634"/>
<dbReference type="KEGG" id="ypm:YP_3637"/>
<dbReference type="PATRIC" id="fig|214092.21.peg.800"/>
<dbReference type="eggNOG" id="COG0275">
    <property type="taxonomic scope" value="Bacteria"/>
</dbReference>
<dbReference type="HOGENOM" id="CLU_038422_2_0_6"/>
<dbReference type="OMA" id="NPAKRTF"/>
<dbReference type="OrthoDB" id="9806637at2"/>
<dbReference type="Proteomes" id="UP000000815">
    <property type="component" value="Chromosome"/>
</dbReference>
<dbReference type="Proteomes" id="UP000001019">
    <property type="component" value="Chromosome"/>
</dbReference>
<dbReference type="Proteomes" id="UP000002490">
    <property type="component" value="Chromosome"/>
</dbReference>
<dbReference type="GO" id="GO:0005737">
    <property type="term" value="C:cytoplasm"/>
    <property type="evidence" value="ECO:0000318"/>
    <property type="project" value="GO_Central"/>
</dbReference>
<dbReference type="GO" id="GO:0071424">
    <property type="term" value="F:rRNA (cytosine-N4-)-methyltransferase activity"/>
    <property type="evidence" value="ECO:0000318"/>
    <property type="project" value="GO_Central"/>
</dbReference>
<dbReference type="GO" id="GO:0070475">
    <property type="term" value="P:rRNA base methylation"/>
    <property type="evidence" value="ECO:0000318"/>
    <property type="project" value="GO_Central"/>
</dbReference>
<dbReference type="FunFam" id="1.10.150.170:FF:000001">
    <property type="entry name" value="Ribosomal RNA small subunit methyltransferase H"/>
    <property type="match status" value="1"/>
</dbReference>
<dbReference type="Gene3D" id="1.10.150.170">
    <property type="entry name" value="Putative methyltransferase TM0872, insert domain"/>
    <property type="match status" value="1"/>
</dbReference>
<dbReference type="Gene3D" id="3.40.50.150">
    <property type="entry name" value="Vaccinia Virus protein VP39"/>
    <property type="match status" value="1"/>
</dbReference>
<dbReference type="HAMAP" id="MF_01007">
    <property type="entry name" value="16SrRNA_methyltr_H"/>
    <property type="match status" value="1"/>
</dbReference>
<dbReference type="InterPro" id="IPR002903">
    <property type="entry name" value="RsmH"/>
</dbReference>
<dbReference type="InterPro" id="IPR023397">
    <property type="entry name" value="SAM-dep_MeTrfase_MraW_recog"/>
</dbReference>
<dbReference type="InterPro" id="IPR029063">
    <property type="entry name" value="SAM-dependent_MTases_sf"/>
</dbReference>
<dbReference type="NCBIfam" id="TIGR00006">
    <property type="entry name" value="16S rRNA (cytosine(1402)-N(4))-methyltransferase RsmH"/>
    <property type="match status" value="1"/>
</dbReference>
<dbReference type="PANTHER" id="PTHR11265:SF0">
    <property type="entry name" value="12S RRNA N4-METHYLCYTIDINE METHYLTRANSFERASE"/>
    <property type="match status" value="1"/>
</dbReference>
<dbReference type="PANTHER" id="PTHR11265">
    <property type="entry name" value="S-ADENOSYL-METHYLTRANSFERASE MRAW"/>
    <property type="match status" value="1"/>
</dbReference>
<dbReference type="Pfam" id="PF01795">
    <property type="entry name" value="Methyltransf_5"/>
    <property type="match status" value="1"/>
</dbReference>
<dbReference type="PIRSF" id="PIRSF004486">
    <property type="entry name" value="MraW"/>
    <property type="match status" value="1"/>
</dbReference>
<dbReference type="SUPFAM" id="SSF81799">
    <property type="entry name" value="Putative methyltransferase TM0872, insert domain"/>
    <property type="match status" value="1"/>
</dbReference>
<dbReference type="SUPFAM" id="SSF53335">
    <property type="entry name" value="S-adenosyl-L-methionine-dependent methyltransferases"/>
    <property type="match status" value="1"/>
</dbReference>
<comment type="function">
    <text evidence="1">Specifically methylates the N4 position of cytidine in position 1402 (C1402) of 16S rRNA.</text>
</comment>
<comment type="catalytic activity">
    <reaction evidence="1">
        <text>cytidine(1402) in 16S rRNA + S-adenosyl-L-methionine = N(4)-methylcytidine(1402) in 16S rRNA + S-adenosyl-L-homocysteine + H(+)</text>
        <dbReference type="Rhea" id="RHEA:42928"/>
        <dbReference type="Rhea" id="RHEA-COMP:10286"/>
        <dbReference type="Rhea" id="RHEA-COMP:10287"/>
        <dbReference type="ChEBI" id="CHEBI:15378"/>
        <dbReference type="ChEBI" id="CHEBI:57856"/>
        <dbReference type="ChEBI" id="CHEBI:59789"/>
        <dbReference type="ChEBI" id="CHEBI:74506"/>
        <dbReference type="ChEBI" id="CHEBI:82748"/>
        <dbReference type="EC" id="2.1.1.199"/>
    </reaction>
</comment>
<comment type="subcellular location">
    <subcellularLocation>
        <location evidence="1">Cytoplasm</location>
    </subcellularLocation>
</comment>
<comment type="similarity">
    <text evidence="1">Belongs to the methyltransferase superfamily. RsmH family.</text>
</comment>
<name>RSMH_YERPE</name>
<protein>
    <recommendedName>
        <fullName evidence="1">Ribosomal RNA small subunit methyltransferase H</fullName>
        <ecNumber evidence="1">2.1.1.199</ecNumber>
    </recommendedName>
    <alternativeName>
        <fullName evidence="1">16S rRNA m(4)C1402 methyltransferase</fullName>
    </alternativeName>
    <alternativeName>
        <fullName evidence="1">rRNA (cytosine-N(4)-)-methyltransferase RsmH</fullName>
    </alternativeName>
</protein>
<accession>Q8ZIF7</accession>
<accession>Q0WJC0</accession>
<feature type="chain" id="PRO_0000108756" description="Ribosomal RNA small subunit methyltransferase H">
    <location>
        <begin position="1"/>
        <end position="320"/>
    </location>
</feature>
<feature type="binding site" evidence="1">
    <location>
        <begin position="42"/>
        <end position="44"/>
    </location>
    <ligand>
        <name>S-adenosyl-L-methionine</name>
        <dbReference type="ChEBI" id="CHEBI:59789"/>
    </ligand>
</feature>
<feature type="binding site" evidence="1">
    <location>
        <position position="62"/>
    </location>
    <ligand>
        <name>S-adenosyl-L-methionine</name>
        <dbReference type="ChEBI" id="CHEBI:59789"/>
    </ligand>
</feature>
<feature type="binding site" evidence="1">
    <location>
        <position position="86"/>
    </location>
    <ligand>
        <name>S-adenosyl-L-methionine</name>
        <dbReference type="ChEBI" id="CHEBI:59789"/>
    </ligand>
</feature>
<feature type="binding site" evidence="1">
    <location>
        <position position="108"/>
    </location>
    <ligand>
        <name>S-adenosyl-L-methionine</name>
        <dbReference type="ChEBI" id="CHEBI:59789"/>
    </ligand>
</feature>
<feature type="binding site" evidence="1">
    <location>
        <position position="115"/>
    </location>
    <ligand>
        <name>S-adenosyl-L-methionine</name>
        <dbReference type="ChEBI" id="CHEBI:59789"/>
    </ligand>
</feature>
<keyword id="KW-0963">Cytoplasm</keyword>
<keyword id="KW-0489">Methyltransferase</keyword>
<keyword id="KW-1185">Reference proteome</keyword>
<keyword id="KW-0698">rRNA processing</keyword>
<keyword id="KW-0949">S-adenosyl-L-methionine</keyword>
<keyword id="KW-0808">Transferase</keyword>
<evidence type="ECO:0000255" key="1">
    <source>
        <dbReference type="HAMAP-Rule" id="MF_01007"/>
    </source>
</evidence>
<reference key="1">
    <citation type="journal article" date="2001" name="Nature">
        <title>Genome sequence of Yersinia pestis, the causative agent of plague.</title>
        <authorList>
            <person name="Parkhill J."/>
            <person name="Wren B.W."/>
            <person name="Thomson N.R."/>
            <person name="Titball R.W."/>
            <person name="Holden M.T.G."/>
            <person name="Prentice M.B."/>
            <person name="Sebaihia M."/>
            <person name="James K.D."/>
            <person name="Churcher C.M."/>
            <person name="Mungall K.L."/>
            <person name="Baker S."/>
            <person name="Basham D."/>
            <person name="Bentley S.D."/>
            <person name="Brooks K."/>
            <person name="Cerdeno-Tarraga A.-M."/>
            <person name="Chillingworth T."/>
            <person name="Cronin A."/>
            <person name="Davies R.M."/>
            <person name="Davis P."/>
            <person name="Dougan G."/>
            <person name="Feltwell T."/>
            <person name="Hamlin N."/>
            <person name="Holroyd S."/>
            <person name="Jagels K."/>
            <person name="Karlyshev A.V."/>
            <person name="Leather S."/>
            <person name="Moule S."/>
            <person name="Oyston P.C.F."/>
            <person name="Quail M.A."/>
            <person name="Rutherford K.M."/>
            <person name="Simmonds M."/>
            <person name="Skelton J."/>
            <person name="Stevens K."/>
            <person name="Whitehead S."/>
            <person name="Barrell B.G."/>
        </authorList>
    </citation>
    <scope>NUCLEOTIDE SEQUENCE [LARGE SCALE GENOMIC DNA]</scope>
    <source>
        <strain>CO-92 / Biovar Orientalis</strain>
    </source>
</reference>
<reference key="2">
    <citation type="journal article" date="2002" name="J. Bacteriol.">
        <title>Genome sequence of Yersinia pestis KIM.</title>
        <authorList>
            <person name="Deng W."/>
            <person name="Burland V."/>
            <person name="Plunkett G. III"/>
            <person name="Boutin A."/>
            <person name="Mayhew G.F."/>
            <person name="Liss P."/>
            <person name="Perna N.T."/>
            <person name="Rose D.J."/>
            <person name="Mau B."/>
            <person name="Zhou S."/>
            <person name="Schwartz D.C."/>
            <person name="Fetherston J.D."/>
            <person name="Lindler L.E."/>
            <person name="Brubaker R.R."/>
            <person name="Plano G.V."/>
            <person name="Straley S.C."/>
            <person name="McDonough K.A."/>
            <person name="Nilles M.L."/>
            <person name="Matson J.S."/>
            <person name="Blattner F.R."/>
            <person name="Perry R.D."/>
        </authorList>
    </citation>
    <scope>NUCLEOTIDE SEQUENCE [LARGE SCALE GENOMIC DNA]</scope>
    <source>
        <strain>KIM10+ / Biovar Mediaevalis</strain>
    </source>
</reference>
<reference key="3">
    <citation type="journal article" date="2004" name="DNA Res.">
        <title>Complete genome sequence of Yersinia pestis strain 91001, an isolate avirulent to humans.</title>
        <authorList>
            <person name="Song Y."/>
            <person name="Tong Z."/>
            <person name="Wang J."/>
            <person name="Wang L."/>
            <person name="Guo Z."/>
            <person name="Han Y."/>
            <person name="Zhang J."/>
            <person name="Pei D."/>
            <person name="Zhou D."/>
            <person name="Qin H."/>
            <person name="Pang X."/>
            <person name="Han Y."/>
            <person name="Zhai J."/>
            <person name="Li M."/>
            <person name="Cui B."/>
            <person name="Qi Z."/>
            <person name="Jin L."/>
            <person name="Dai R."/>
            <person name="Chen F."/>
            <person name="Li S."/>
            <person name="Ye C."/>
            <person name="Du Z."/>
            <person name="Lin W."/>
            <person name="Wang J."/>
            <person name="Yu J."/>
            <person name="Yang H."/>
            <person name="Wang J."/>
            <person name="Huang P."/>
            <person name="Yang R."/>
        </authorList>
    </citation>
    <scope>NUCLEOTIDE SEQUENCE [LARGE SCALE GENOMIC DNA]</scope>
    <source>
        <strain>91001 / Biovar Mediaevalis</strain>
    </source>
</reference>
<sequence length="320" mass="35590">MVDNNKTVDNNYKHTSVLLDEAVKGLNIRDNGIYIDGTFGRGGHSRLILSQLGPEGRLIAIDRDPEAIEAAKQITDPRFSIVHGPFSDLAHYVRDLDLVGRIDGILLDLGVSSPQLDDAERGFSFMRDGPLDMRMDPSRGLSAAEWLMKASADDIAWVLKTFGEERFAKRLAKAIVERNLTQPMTRTKELADLIANASPFRDKHKHPATRSFQAIRIYINSELEEIERALDGAHEVLAPEGRLSVISFHSLEDRIVKNFIRHHSRGPQVPAGLPLTEAQLRSMGGRTLKSVGKMMPGDAEIAENPRARSSVLRFAERIGE</sequence>